<comment type="function">
    <text evidence="1">Catalyzes the transfer of endogenously produced octanoic acid from octanoyl-acyl-carrier-protein onto the lipoyl domains of lipoate-dependent enzymes. Lipoyl-ACP can also act as a substrate although octanoyl-ACP is likely to be the physiological substrate.</text>
</comment>
<comment type="catalytic activity">
    <reaction evidence="1">
        <text>octanoyl-[ACP] + L-lysyl-[protein] = N(6)-octanoyl-L-lysyl-[protein] + holo-[ACP] + H(+)</text>
        <dbReference type="Rhea" id="RHEA:17665"/>
        <dbReference type="Rhea" id="RHEA-COMP:9636"/>
        <dbReference type="Rhea" id="RHEA-COMP:9685"/>
        <dbReference type="Rhea" id="RHEA-COMP:9752"/>
        <dbReference type="Rhea" id="RHEA-COMP:9928"/>
        <dbReference type="ChEBI" id="CHEBI:15378"/>
        <dbReference type="ChEBI" id="CHEBI:29969"/>
        <dbReference type="ChEBI" id="CHEBI:64479"/>
        <dbReference type="ChEBI" id="CHEBI:78463"/>
        <dbReference type="ChEBI" id="CHEBI:78809"/>
        <dbReference type="EC" id="2.3.1.181"/>
    </reaction>
</comment>
<comment type="pathway">
    <text evidence="1">Protein modification; protein lipoylation via endogenous pathway; protein N(6)-(lipoyl)lysine from octanoyl-[acyl-carrier-protein]: step 1/2.</text>
</comment>
<comment type="subcellular location">
    <subcellularLocation>
        <location evidence="1">Cytoplasm</location>
    </subcellularLocation>
</comment>
<comment type="miscellaneous">
    <text evidence="1">In the reaction, the free carboxyl group of octanoic acid is attached via an amide linkage to the epsilon-amino group of a specific lysine residue of lipoyl domains of lipoate-dependent enzymes.</text>
</comment>
<comment type="similarity">
    <text evidence="1">Belongs to the LipB family.</text>
</comment>
<keyword id="KW-0012">Acyltransferase</keyword>
<keyword id="KW-0963">Cytoplasm</keyword>
<keyword id="KW-1185">Reference proteome</keyword>
<keyword id="KW-0808">Transferase</keyword>
<protein>
    <recommendedName>
        <fullName evidence="1">Octanoyltransferase</fullName>
        <ecNumber evidence="1">2.3.1.181</ecNumber>
    </recommendedName>
    <alternativeName>
        <fullName evidence="1">Lipoate-protein ligase B</fullName>
    </alternativeName>
    <alternativeName>
        <fullName evidence="1">Lipoyl/octanoyl transferase</fullName>
    </alternativeName>
    <alternativeName>
        <fullName evidence="1">Octanoyl-[acyl-carrier-protein]-protein N-octanoyltransferase</fullName>
    </alternativeName>
</protein>
<dbReference type="EC" id="2.3.1.181" evidence="1"/>
<dbReference type="EMBL" id="CR555306">
    <property type="protein sequence ID" value="CAI07844.1"/>
    <property type="molecule type" value="Genomic_DNA"/>
</dbReference>
<dbReference type="RefSeq" id="WP_011237558.1">
    <property type="nucleotide sequence ID" value="NC_006513.1"/>
</dbReference>
<dbReference type="SMR" id="Q5P4B9"/>
<dbReference type="STRING" id="76114.ebA3048"/>
<dbReference type="KEGG" id="eba:ebA3048"/>
<dbReference type="eggNOG" id="COG0321">
    <property type="taxonomic scope" value="Bacteria"/>
</dbReference>
<dbReference type="HOGENOM" id="CLU_035168_3_1_4"/>
<dbReference type="UniPathway" id="UPA00538">
    <property type="reaction ID" value="UER00592"/>
</dbReference>
<dbReference type="Proteomes" id="UP000006552">
    <property type="component" value="Chromosome"/>
</dbReference>
<dbReference type="GO" id="GO:0005737">
    <property type="term" value="C:cytoplasm"/>
    <property type="evidence" value="ECO:0007669"/>
    <property type="project" value="UniProtKB-SubCell"/>
</dbReference>
<dbReference type="GO" id="GO:0033819">
    <property type="term" value="F:lipoyl(octanoyl) transferase activity"/>
    <property type="evidence" value="ECO:0007669"/>
    <property type="project" value="UniProtKB-EC"/>
</dbReference>
<dbReference type="GO" id="GO:0036211">
    <property type="term" value="P:protein modification process"/>
    <property type="evidence" value="ECO:0007669"/>
    <property type="project" value="InterPro"/>
</dbReference>
<dbReference type="CDD" id="cd16444">
    <property type="entry name" value="LipB"/>
    <property type="match status" value="1"/>
</dbReference>
<dbReference type="FunFam" id="3.30.930.10:FF:000020">
    <property type="entry name" value="Octanoyltransferase"/>
    <property type="match status" value="1"/>
</dbReference>
<dbReference type="Gene3D" id="3.30.930.10">
    <property type="entry name" value="Bira Bifunctional Protein, Domain 2"/>
    <property type="match status" value="1"/>
</dbReference>
<dbReference type="HAMAP" id="MF_00013">
    <property type="entry name" value="LipB"/>
    <property type="match status" value="1"/>
</dbReference>
<dbReference type="InterPro" id="IPR045864">
    <property type="entry name" value="aa-tRNA-synth_II/BPL/LPL"/>
</dbReference>
<dbReference type="InterPro" id="IPR004143">
    <property type="entry name" value="BPL_LPL_catalytic"/>
</dbReference>
<dbReference type="InterPro" id="IPR000544">
    <property type="entry name" value="Octanoyltransferase"/>
</dbReference>
<dbReference type="InterPro" id="IPR020605">
    <property type="entry name" value="Octanoyltransferase_CS"/>
</dbReference>
<dbReference type="NCBIfam" id="TIGR00214">
    <property type="entry name" value="lipB"/>
    <property type="match status" value="1"/>
</dbReference>
<dbReference type="NCBIfam" id="NF010922">
    <property type="entry name" value="PRK14342.1"/>
    <property type="match status" value="1"/>
</dbReference>
<dbReference type="NCBIfam" id="NF010923">
    <property type="entry name" value="PRK14343.1"/>
    <property type="match status" value="1"/>
</dbReference>
<dbReference type="PANTHER" id="PTHR10993:SF7">
    <property type="entry name" value="LIPOYLTRANSFERASE 2, MITOCHONDRIAL-RELATED"/>
    <property type="match status" value="1"/>
</dbReference>
<dbReference type="PANTHER" id="PTHR10993">
    <property type="entry name" value="OCTANOYLTRANSFERASE"/>
    <property type="match status" value="1"/>
</dbReference>
<dbReference type="Pfam" id="PF21948">
    <property type="entry name" value="LplA-B_cat"/>
    <property type="match status" value="1"/>
</dbReference>
<dbReference type="PIRSF" id="PIRSF016262">
    <property type="entry name" value="LPLase"/>
    <property type="match status" value="1"/>
</dbReference>
<dbReference type="SUPFAM" id="SSF55681">
    <property type="entry name" value="Class II aaRS and biotin synthetases"/>
    <property type="match status" value="1"/>
</dbReference>
<dbReference type="PROSITE" id="PS51733">
    <property type="entry name" value="BPL_LPL_CATALYTIC"/>
    <property type="match status" value="1"/>
</dbReference>
<dbReference type="PROSITE" id="PS01313">
    <property type="entry name" value="LIPB"/>
    <property type="match status" value="1"/>
</dbReference>
<organism>
    <name type="scientific">Aromatoleum aromaticum (strain DSM 19018 / LMG 30748 / EbN1)</name>
    <name type="common">Azoarcus sp. (strain EbN1)</name>
    <dbReference type="NCBI Taxonomy" id="76114"/>
    <lineage>
        <taxon>Bacteria</taxon>
        <taxon>Pseudomonadati</taxon>
        <taxon>Pseudomonadota</taxon>
        <taxon>Betaproteobacteria</taxon>
        <taxon>Rhodocyclales</taxon>
        <taxon>Rhodocyclaceae</taxon>
        <taxon>Aromatoleum</taxon>
    </lineage>
</organism>
<feature type="chain" id="PRO_0000242706" description="Octanoyltransferase">
    <location>
        <begin position="1"/>
        <end position="231"/>
    </location>
</feature>
<feature type="domain" description="BPL/LPL catalytic" evidence="2">
    <location>
        <begin position="49"/>
        <end position="224"/>
    </location>
</feature>
<feature type="active site" description="Acyl-thioester intermediate" evidence="1">
    <location>
        <position position="186"/>
    </location>
</feature>
<feature type="binding site" evidence="1">
    <location>
        <begin position="88"/>
        <end position="95"/>
    </location>
    <ligand>
        <name>substrate</name>
    </ligand>
</feature>
<feature type="binding site" evidence="1">
    <location>
        <begin position="155"/>
        <end position="157"/>
    </location>
    <ligand>
        <name>substrate</name>
    </ligand>
</feature>
<feature type="binding site" evidence="1">
    <location>
        <begin position="168"/>
        <end position="170"/>
    </location>
    <ligand>
        <name>substrate</name>
    </ligand>
</feature>
<feature type="site" description="Lowers pKa of active site Cys" evidence="1">
    <location>
        <position position="152"/>
    </location>
</feature>
<accession>Q5P4B9</accession>
<evidence type="ECO:0000255" key="1">
    <source>
        <dbReference type="HAMAP-Rule" id="MF_00013"/>
    </source>
</evidence>
<evidence type="ECO:0000255" key="2">
    <source>
        <dbReference type="PROSITE-ProRule" id="PRU01067"/>
    </source>
</evidence>
<sequence>MIAGGELAALPPQAPQPAGTPALVVRRLGCVDYEPTWHAMRAFTDARSADTPDEIWLLEHPPVYTLGQAGQPEHLLRDVGIPLVKIDRGGQITYHGPGQLVAYLLIDLHRRGLKVRELVTLMEQAVIDCLAGYGVGAERKAGAPGVYVDGAKIGALGLRVRNGRSYHGLALNVDVDLAPFSSINPCGYEGLRTVRMKDFGIADDVASVGEHLLTALQRLLPPVYPAGRPPA</sequence>
<reference key="1">
    <citation type="journal article" date="2005" name="Arch. Microbiol.">
        <title>The genome sequence of an anaerobic aromatic-degrading denitrifying bacterium, strain EbN1.</title>
        <authorList>
            <person name="Rabus R."/>
            <person name="Kube M."/>
            <person name="Heider J."/>
            <person name="Beck A."/>
            <person name="Heitmann K."/>
            <person name="Widdel F."/>
            <person name="Reinhardt R."/>
        </authorList>
    </citation>
    <scope>NUCLEOTIDE SEQUENCE [LARGE SCALE GENOMIC DNA]</scope>
    <source>
        <strain>DSM 19018 / LMG 30748 / EbN1</strain>
    </source>
</reference>
<gene>
    <name evidence="1" type="primary">lipB</name>
    <name type="ordered locus">AZOSEA17190</name>
    <name type="ORF">ebA3048</name>
</gene>
<name>LIPB_AROAE</name>
<proteinExistence type="inferred from homology"/>